<keyword id="KW-1003">Cell membrane</keyword>
<keyword id="KW-0472">Membrane</keyword>
<keyword id="KW-1185">Reference proteome</keyword>
<keyword id="KW-0677">Repeat</keyword>
<keyword id="KW-0812">Transmembrane</keyword>
<keyword id="KW-1133">Transmembrane helix</keyword>
<keyword id="KW-0813">Transport</keyword>
<name>AQPA_DICDI</name>
<sequence>MVKVVPLRFITYDPLKDPSKMIYRRPISKPVKAFKGFFSEFLGTLYLVYFCGGSVCAAFAVAGDSAARALLGGLIQGMALAALIWAVSGVSGCNLNPAVTLANLLSGRVGLIDSLYYVAAQILGCIAGAGILYGCLPNMYRIDLGVPHLAPGMNTGQAFLMEMMLTSILCLCVLGTSVFNVWDRRLNRIAPFAIGLALFIGVAIGFNFSGGALNPVRVLGPSIISGVWSHHWVYWLGPIVGAILAAFIYRCLLQERFDVIERPGYIAPLIDPSTAVSSY</sequence>
<accession>Q9U8P7</accession>
<accession>Q55FK7</accession>
<evidence type="ECO:0000250" key="1"/>
<evidence type="ECO:0000255" key="2"/>
<evidence type="ECO:0000269" key="3">
    <source>
    </source>
</evidence>
<evidence type="ECO:0000305" key="4"/>
<organism>
    <name type="scientific">Dictyostelium discoideum</name>
    <name type="common">Social amoeba</name>
    <dbReference type="NCBI Taxonomy" id="44689"/>
    <lineage>
        <taxon>Eukaryota</taxon>
        <taxon>Amoebozoa</taxon>
        <taxon>Evosea</taxon>
        <taxon>Eumycetozoa</taxon>
        <taxon>Dictyostelia</taxon>
        <taxon>Dictyosteliales</taxon>
        <taxon>Dictyosteliaceae</taxon>
        <taxon>Dictyostelium</taxon>
    </lineage>
</organism>
<comment type="function">
    <text evidence="1 3">May form a water-specific channel (By similarity). Required for prolonged spore survival on fruiting bodies.</text>
</comment>
<comment type="subcellular location">
    <subcellularLocation>
        <location evidence="1">Cell membrane</location>
        <topology evidence="1">Multi-pass membrane protein</topology>
    </subcellularLocation>
</comment>
<comment type="developmental stage">
    <text evidence="3">First detected at the tight mound stage. Highly expressed in fingers and late culminants. In slugs, detected in prespore cells, but not in prestalk cells.</text>
</comment>
<comment type="induction">
    <text evidence="3">Constitutively expressed during hyperosmotic stress.</text>
</comment>
<comment type="domain">
    <text>Aquaporins contain two tandem repeats each containing three membrane-spanning domains and a pore-forming loop with the signature motif Asn-Pro-Ala (NPA). Here, the second motif is Asn-Pro-Val (NPV).</text>
</comment>
<comment type="similarity">
    <text evidence="4">Belongs to the MIP/aquaporin (TC 1.A.8) family.</text>
</comment>
<reference key="1">
    <citation type="journal article" date="2000" name="Gene">
        <title>Loss of a member of the aquaporin gene family, aqpA affects spore dormancy in Dictyostelium.</title>
        <authorList>
            <person name="Mitra B.N."/>
            <person name="Yoshino R."/>
            <person name="Morio T."/>
            <person name="Yokoyama M."/>
            <person name="Maeda M."/>
            <person name="Urushihara H."/>
            <person name="Tanaka Y."/>
        </authorList>
    </citation>
    <scope>NUCLEOTIDE SEQUENCE [GENOMIC DNA]</scope>
    <scope>DEVELOPMENTAL STAGE</scope>
    <scope>FUNCTION</scope>
    <scope>INDUCTION</scope>
    <source>
        <strain>AX4</strain>
    </source>
</reference>
<reference key="2">
    <citation type="submission" date="1997-10" db="EMBL/GenBank/DDBJ databases">
        <title>Characterization of a water channel protein gene aqpA in Dictyostelium discoideum.</title>
        <authorList>
            <person name="Mitra B.N."/>
            <person name="Yoshino R."/>
            <person name="Morio T."/>
            <person name="Urushihara H."/>
            <person name="Tanaka Y."/>
        </authorList>
    </citation>
    <scope>NUCLEOTIDE SEQUENCE [MRNA]</scope>
    <source>
        <strain>AX4</strain>
    </source>
</reference>
<reference key="3">
    <citation type="journal article" date="2005" name="Nature">
        <title>The genome of the social amoeba Dictyostelium discoideum.</title>
        <authorList>
            <person name="Eichinger L."/>
            <person name="Pachebat J.A."/>
            <person name="Gloeckner G."/>
            <person name="Rajandream M.A."/>
            <person name="Sucgang R."/>
            <person name="Berriman M."/>
            <person name="Song J."/>
            <person name="Olsen R."/>
            <person name="Szafranski K."/>
            <person name="Xu Q."/>
            <person name="Tunggal B."/>
            <person name="Kummerfeld S."/>
            <person name="Madera M."/>
            <person name="Konfortov B.A."/>
            <person name="Rivero F."/>
            <person name="Bankier A.T."/>
            <person name="Lehmann R."/>
            <person name="Hamlin N."/>
            <person name="Davies R."/>
            <person name="Gaudet P."/>
            <person name="Fey P."/>
            <person name="Pilcher K."/>
            <person name="Chen G."/>
            <person name="Saunders D."/>
            <person name="Sodergren E.J."/>
            <person name="Davis P."/>
            <person name="Kerhornou A."/>
            <person name="Nie X."/>
            <person name="Hall N."/>
            <person name="Anjard C."/>
            <person name="Hemphill L."/>
            <person name="Bason N."/>
            <person name="Farbrother P."/>
            <person name="Desany B."/>
            <person name="Just E."/>
            <person name="Morio T."/>
            <person name="Rost R."/>
            <person name="Churcher C.M."/>
            <person name="Cooper J."/>
            <person name="Haydock S."/>
            <person name="van Driessche N."/>
            <person name="Cronin A."/>
            <person name="Goodhead I."/>
            <person name="Muzny D.M."/>
            <person name="Mourier T."/>
            <person name="Pain A."/>
            <person name="Lu M."/>
            <person name="Harper D."/>
            <person name="Lindsay R."/>
            <person name="Hauser H."/>
            <person name="James K.D."/>
            <person name="Quiles M."/>
            <person name="Madan Babu M."/>
            <person name="Saito T."/>
            <person name="Buchrieser C."/>
            <person name="Wardroper A."/>
            <person name="Felder M."/>
            <person name="Thangavelu M."/>
            <person name="Johnson D."/>
            <person name="Knights A."/>
            <person name="Loulseged H."/>
            <person name="Mungall K.L."/>
            <person name="Oliver K."/>
            <person name="Price C."/>
            <person name="Quail M.A."/>
            <person name="Urushihara H."/>
            <person name="Hernandez J."/>
            <person name="Rabbinowitsch E."/>
            <person name="Steffen D."/>
            <person name="Sanders M."/>
            <person name="Ma J."/>
            <person name="Kohara Y."/>
            <person name="Sharp S."/>
            <person name="Simmonds M.N."/>
            <person name="Spiegler S."/>
            <person name="Tivey A."/>
            <person name="Sugano S."/>
            <person name="White B."/>
            <person name="Walker D."/>
            <person name="Woodward J.R."/>
            <person name="Winckler T."/>
            <person name="Tanaka Y."/>
            <person name="Shaulsky G."/>
            <person name="Schleicher M."/>
            <person name="Weinstock G.M."/>
            <person name="Rosenthal A."/>
            <person name="Cox E.C."/>
            <person name="Chisholm R.L."/>
            <person name="Gibbs R.A."/>
            <person name="Loomis W.F."/>
            <person name="Platzer M."/>
            <person name="Kay R.R."/>
            <person name="Williams J.G."/>
            <person name="Dear P.H."/>
            <person name="Noegel A.A."/>
            <person name="Barrell B.G."/>
            <person name="Kuspa A."/>
        </authorList>
    </citation>
    <scope>NUCLEOTIDE SEQUENCE [LARGE SCALE GENOMIC DNA]</scope>
    <source>
        <strain>AX4</strain>
    </source>
</reference>
<feature type="chain" id="PRO_0000327505" description="Aquaporin A">
    <location>
        <begin position="1"/>
        <end position="279"/>
    </location>
</feature>
<feature type="topological domain" description="Cytoplasmic" evidence="2">
    <location>
        <begin position="1"/>
        <end position="40"/>
    </location>
</feature>
<feature type="transmembrane region" description="Helical" evidence="2">
    <location>
        <begin position="41"/>
        <end position="61"/>
    </location>
</feature>
<feature type="topological domain" description="Extracellular" evidence="2">
    <location>
        <begin position="62"/>
        <end position="69"/>
    </location>
</feature>
<feature type="transmembrane region" description="Helical" evidence="2">
    <location>
        <begin position="70"/>
        <end position="90"/>
    </location>
</feature>
<feature type="topological domain" description="Cytoplasmic" evidence="2">
    <location>
        <begin position="91"/>
        <end position="114"/>
    </location>
</feature>
<feature type="transmembrane region" description="Helical" evidence="2">
    <location>
        <begin position="115"/>
        <end position="135"/>
    </location>
</feature>
<feature type="topological domain" description="Extracellular" evidence="2">
    <location>
        <begin position="136"/>
        <end position="158"/>
    </location>
</feature>
<feature type="transmembrane region" description="Helical" evidence="2">
    <location>
        <begin position="159"/>
        <end position="179"/>
    </location>
</feature>
<feature type="topological domain" description="Cytoplasmic" evidence="2">
    <location>
        <begin position="180"/>
        <end position="188"/>
    </location>
</feature>
<feature type="transmembrane region" description="Helical" evidence="2">
    <location>
        <begin position="189"/>
        <end position="209"/>
    </location>
</feature>
<feature type="topological domain" description="Extracellular" evidence="2">
    <location>
        <begin position="210"/>
        <end position="227"/>
    </location>
</feature>
<feature type="transmembrane region" description="Helical" evidence="2">
    <location>
        <begin position="228"/>
        <end position="248"/>
    </location>
</feature>
<feature type="topological domain" description="Cytoplasmic" evidence="2">
    <location>
        <begin position="249"/>
        <end position="279"/>
    </location>
</feature>
<feature type="short sequence motif" description="NPA 1" evidence="1">
    <location>
        <begin position="96"/>
        <end position="98"/>
    </location>
</feature>
<feature type="short sequence motif" description="NPA 2" evidence="1">
    <location>
        <begin position="214"/>
        <end position="216"/>
    </location>
</feature>
<proteinExistence type="evidence at transcript level"/>
<dbReference type="EMBL" id="AB032841">
    <property type="protein sequence ID" value="BAA85158.1"/>
    <property type="molecule type" value="Genomic_DNA"/>
</dbReference>
<dbReference type="EMBL" id="AB008431">
    <property type="protein sequence ID" value="BAF94060.1"/>
    <property type="molecule type" value="mRNA"/>
</dbReference>
<dbReference type="EMBL" id="AAFI02000003">
    <property type="protein sequence ID" value="EAL73141.1"/>
    <property type="molecule type" value="Genomic_DNA"/>
</dbReference>
<dbReference type="RefSeq" id="XP_647526.1">
    <property type="nucleotide sequence ID" value="XM_642434.1"/>
</dbReference>
<dbReference type="SMR" id="Q9U8P7"/>
<dbReference type="FunCoup" id="Q9U8P7">
    <property type="interactions" value="33"/>
</dbReference>
<dbReference type="STRING" id="44689.Q9U8P7"/>
<dbReference type="PaxDb" id="44689-DDB0191271"/>
<dbReference type="EnsemblProtists" id="EAL73141">
    <property type="protein sequence ID" value="EAL73141"/>
    <property type="gene ID" value="DDB_G0267378"/>
</dbReference>
<dbReference type="GeneID" id="8616333"/>
<dbReference type="KEGG" id="ddi:DDB_G0267378"/>
<dbReference type="dictyBase" id="DDB_G0267378">
    <property type="gene designation" value="aqpA"/>
</dbReference>
<dbReference type="VEuPathDB" id="AmoebaDB:DDB_G0267378"/>
<dbReference type="eggNOG" id="KOG0223">
    <property type="taxonomic scope" value="Eukaryota"/>
</dbReference>
<dbReference type="HOGENOM" id="CLU_020019_3_3_1"/>
<dbReference type="InParanoid" id="Q9U8P7"/>
<dbReference type="OMA" id="FKKKMFW"/>
<dbReference type="PhylomeDB" id="Q9U8P7"/>
<dbReference type="Reactome" id="R-DDI-1237044">
    <property type="pathway name" value="Erythrocytes take up carbon dioxide and release oxygen"/>
</dbReference>
<dbReference type="Reactome" id="R-DDI-1247673">
    <property type="pathway name" value="Erythrocytes take up oxygen and release carbon dioxide"/>
</dbReference>
<dbReference type="Reactome" id="R-DDI-432040">
    <property type="pathway name" value="Vasopressin regulates renal water homeostasis via Aquaporins"/>
</dbReference>
<dbReference type="Reactome" id="R-DDI-432047">
    <property type="pathway name" value="Passive transport by Aquaporins"/>
</dbReference>
<dbReference type="PRO" id="PR:Q9U8P7"/>
<dbReference type="Proteomes" id="UP000002195">
    <property type="component" value="Chromosome 1"/>
</dbReference>
<dbReference type="GO" id="GO:0005886">
    <property type="term" value="C:plasma membrane"/>
    <property type="evidence" value="ECO:0000318"/>
    <property type="project" value="GO_Central"/>
</dbReference>
<dbReference type="GO" id="GO:0015250">
    <property type="term" value="F:water channel activity"/>
    <property type="evidence" value="ECO:0000318"/>
    <property type="project" value="GO_Central"/>
</dbReference>
<dbReference type="GO" id="GO:0006971">
    <property type="term" value="P:hypotonic response"/>
    <property type="evidence" value="ECO:0007007"/>
    <property type="project" value="dictyBase"/>
</dbReference>
<dbReference type="GO" id="GO:0006833">
    <property type="term" value="P:water transport"/>
    <property type="evidence" value="ECO:0000318"/>
    <property type="project" value="GO_Central"/>
</dbReference>
<dbReference type="CDD" id="cd00333">
    <property type="entry name" value="MIP"/>
    <property type="match status" value="1"/>
</dbReference>
<dbReference type="FunFam" id="1.20.1080.10:FF:000062">
    <property type="entry name" value="Aquaporin A"/>
    <property type="match status" value="1"/>
</dbReference>
<dbReference type="Gene3D" id="1.20.1080.10">
    <property type="entry name" value="Glycerol uptake facilitator protein"/>
    <property type="match status" value="1"/>
</dbReference>
<dbReference type="InterPro" id="IPR023271">
    <property type="entry name" value="Aquaporin-like"/>
</dbReference>
<dbReference type="InterPro" id="IPR034294">
    <property type="entry name" value="Aquaporin_transptr"/>
</dbReference>
<dbReference type="InterPro" id="IPR000425">
    <property type="entry name" value="MIP"/>
</dbReference>
<dbReference type="InterPro" id="IPR022357">
    <property type="entry name" value="MIP_CS"/>
</dbReference>
<dbReference type="PANTHER" id="PTHR19139">
    <property type="entry name" value="AQUAPORIN TRANSPORTER"/>
    <property type="match status" value="1"/>
</dbReference>
<dbReference type="PANTHER" id="PTHR19139:SF199">
    <property type="entry name" value="MIP17260P"/>
    <property type="match status" value="1"/>
</dbReference>
<dbReference type="Pfam" id="PF00230">
    <property type="entry name" value="MIP"/>
    <property type="match status" value="1"/>
</dbReference>
<dbReference type="PRINTS" id="PR00783">
    <property type="entry name" value="MINTRINSICP"/>
</dbReference>
<dbReference type="SUPFAM" id="SSF81338">
    <property type="entry name" value="Aquaporin-like"/>
    <property type="match status" value="1"/>
</dbReference>
<dbReference type="PROSITE" id="PS00221">
    <property type="entry name" value="MIP"/>
    <property type="match status" value="1"/>
</dbReference>
<protein>
    <recommendedName>
        <fullName>Aquaporin A</fullName>
    </recommendedName>
</protein>
<gene>
    <name type="primary">aqpA</name>
    <name type="ORF">DDB_G0267378</name>
</gene>